<organism>
    <name type="scientific">Cupriavidus necator (strain ATCC 17699 / DSM 428 / KCTC 22496 / NCIMB 10442 / H16 / Stanier 337)</name>
    <name type="common">Ralstonia eutropha</name>
    <dbReference type="NCBI Taxonomy" id="381666"/>
    <lineage>
        <taxon>Bacteria</taxon>
        <taxon>Pseudomonadati</taxon>
        <taxon>Pseudomonadota</taxon>
        <taxon>Betaproteobacteria</taxon>
        <taxon>Burkholderiales</taxon>
        <taxon>Burkholderiaceae</taxon>
        <taxon>Cupriavidus</taxon>
    </lineage>
</organism>
<accession>Q0KFG6</accession>
<gene>
    <name evidence="1" type="primary">mnmE</name>
    <name evidence="1" type="synonym">trmE</name>
    <name type="ordered locus">H16_A0103</name>
</gene>
<sequence>MTAPQVPIAAIATAPGRGGIGVVRVSGPDVGPVMRSVCGQALKPRHATYLPFLDGHGKVIDHGLALYFPAPNSYTGEEVLELQGHGGPVVMQMLLTRCLQAGDGIGLRLAEPGEFTRRAFLNDKLDLAQAEAVADLIEASTEAAARSAARSMEGEFSNAIRQLVDKVIHLRMLVEATLDFPEEEIDFLEQSDARGQLATIRTELSGVLAQARQGALLREGLSVVLAGQPNVGKSSLLNALAGAELAIVTPIAGTTRDRVRETIQIDGIPLHIIDTAGLREHAADEVERIGIERTWDAIRRADIVLHLVDATDYLRHGLSETDDAIDDQLSGQLPPGSPIVRIVNKIDKAPAVGDVVFGGNRPHVVAANGPNPTEIWISARTGAGIELLRRELLRLVGWQSGNEGNFLARERHLTALRNAQSHLDIAAEQAEHQAQALDLFAEELRLAQDCLNSITGEFTSDDLLGTIFTRFCIGK</sequence>
<comment type="function">
    <text evidence="1">Exhibits a very high intrinsic GTPase hydrolysis rate. Involved in the addition of a carboxymethylaminomethyl (cmnm) group at the wobble position (U34) of certain tRNAs, forming tRNA-cmnm(5)s(2)U34.</text>
</comment>
<comment type="cofactor">
    <cofactor evidence="1">
        <name>K(+)</name>
        <dbReference type="ChEBI" id="CHEBI:29103"/>
    </cofactor>
    <text evidence="1">Binds 1 potassium ion per subunit.</text>
</comment>
<comment type="subunit">
    <text evidence="1">Homodimer. Heterotetramer of two MnmE and two MnmG subunits.</text>
</comment>
<comment type="subcellular location">
    <subcellularLocation>
        <location evidence="1">Cytoplasm</location>
    </subcellularLocation>
</comment>
<comment type="similarity">
    <text evidence="1">Belongs to the TRAFAC class TrmE-Era-EngA-EngB-Septin-like GTPase superfamily. TrmE GTPase family.</text>
</comment>
<comment type="sequence caution" evidence="2">
    <conflict type="erroneous initiation">
        <sequence resource="EMBL-CDS" id="CAJ91255"/>
    </conflict>
</comment>
<dbReference type="EC" id="3.6.-.-" evidence="1"/>
<dbReference type="EMBL" id="AM260479">
    <property type="protein sequence ID" value="CAJ91255.1"/>
    <property type="status" value="ALT_INIT"/>
    <property type="molecule type" value="Genomic_DNA"/>
</dbReference>
<dbReference type="RefSeq" id="WP_041687099.1">
    <property type="nucleotide sequence ID" value="NC_008313.1"/>
</dbReference>
<dbReference type="SMR" id="Q0KFG6"/>
<dbReference type="STRING" id="381666.H16_A0103"/>
<dbReference type="KEGG" id="reh:H16_A0103"/>
<dbReference type="PATRIC" id="fig|381666.6.peg.452"/>
<dbReference type="eggNOG" id="COG0486">
    <property type="taxonomic scope" value="Bacteria"/>
</dbReference>
<dbReference type="HOGENOM" id="CLU_019624_4_1_4"/>
<dbReference type="OrthoDB" id="9805918at2"/>
<dbReference type="Proteomes" id="UP000008210">
    <property type="component" value="Chromosome 1"/>
</dbReference>
<dbReference type="GO" id="GO:0005829">
    <property type="term" value="C:cytosol"/>
    <property type="evidence" value="ECO:0007669"/>
    <property type="project" value="TreeGrafter"/>
</dbReference>
<dbReference type="GO" id="GO:0005525">
    <property type="term" value="F:GTP binding"/>
    <property type="evidence" value="ECO:0007669"/>
    <property type="project" value="UniProtKB-UniRule"/>
</dbReference>
<dbReference type="GO" id="GO:0003924">
    <property type="term" value="F:GTPase activity"/>
    <property type="evidence" value="ECO:0007669"/>
    <property type="project" value="UniProtKB-UniRule"/>
</dbReference>
<dbReference type="GO" id="GO:0046872">
    <property type="term" value="F:metal ion binding"/>
    <property type="evidence" value="ECO:0007669"/>
    <property type="project" value="UniProtKB-KW"/>
</dbReference>
<dbReference type="GO" id="GO:0030488">
    <property type="term" value="P:tRNA methylation"/>
    <property type="evidence" value="ECO:0007669"/>
    <property type="project" value="TreeGrafter"/>
</dbReference>
<dbReference type="GO" id="GO:0002098">
    <property type="term" value="P:tRNA wobble uridine modification"/>
    <property type="evidence" value="ECO:0007669"/>
    <property type="project" value="TreeGrafter"/>
</dbReference>
<dbReference type="CDD" id="cd04164">
    <property type="entry name" value="trmE"/>
    <property type="match status" value="1"/>
</dbReference>
<dbReference type="CDD" id="cd14858">
    <property type="entry name" value="TrmE_N"/>
    <property type="match status" value="1"/>
</dbReference>
<dbReference type="Gene3D" id="3.40.50.300">
    <property type="entry name" value="P-loop containing nucleotide triphosphate hydrolases"/>
    <property type="match status" value="1"/>
</dbReference>
<dbReference type="Gene3D" id="3.30.1360.120">
    <property type="entry name" value="Probable tRNA modification gtpase trme, domain 1"/>
    <property type="match status" value="1"/>
</dbReference>
<dbReference type="Gene3D" id="1.20.120.430">
    <property type="entry name" value="tRNA modification GTPase MnmE domain 2"/>
    <property type="match status" value="1"/>
</dbReference>
<dbReference type="HAMAP" id="MF_00379">
    <property type="entry name" value="GTPase_MnmE"/>
    <property type="match status" value="1"/>
</dbReference>
<dbReference type="InterPro" id="IPR031168">
    <property type="entry name" value="G_TrmE"/>
</dbReference>
<dbReference type="InterPro" id="IPR006073">
    <property type="entry name" value="GTP-bd"/>
</dbReference>
<dbReference type="InterPro" id="IPR018948">
    <property type="entry name" value="GTP-bd_TrmE_N"/>
</dbReference>
<dbReference type="InterPro" id="IPR004520">
    <property type="entry name" value="GTPase_MnmE"/>
</dbReference>
<dbReference type="InterPro" id="IPR027368">
    <property type="entry name" value="MnmE_dom2"/>
</dbReference>
<dbReference type="InterPro" id="IPR025867">
    <property type="entry name" value="MnmE_helical"/>
</dbReference>
<dbReference type="InterPro" id="IPR027417">
    <property type="entry name" value="P-loop_NTPase"/>
</dbReference>
<dbReference type="InterPro" id="IPR005225">
    <property type="entry name" value="Small_GTP-bd"/>
</dbReference>
<dbReference type="InterPro" id="IPR027266">
    <property type="entry name" value="TrmE/GcvT_dom1"/>
</dbReference>
<dbReference type="NCBIfam" id="TIGR00450">
    <property type="entry name" value="mnmE_trmE_thdF"/>
    <property type="match status" value="1"/>
</dbReference>
<dbReference type="NCBIfam" id="NF003661">
    <property type="entry name" value="PRK05291.1-3"/>
    <property type="match status" value="1"/>
</dbReference>
<dbReference type="NCBIfam" id="TIGR00231">
    <property type="entry name" value="small_GTP"/>
    <property type="match status" value="1"/>
</dbReference>
<dbReference type="PANTHER" id="PTHR42714">
    <property type="entry name" value="TRNA MODIFICATION GTPASE GTPBP3"/>
    <property type="match status" value="1"/>
</dbReference>
<dbReference type="PANTHER" id="PTHR42714:SF2">
    <property type="entry name" value="TRNA MODIFICATION GTPASE GTPBP3, MITOCHONDRIAL"/>
    <property type="match status" value="1"/>
</dbReference>
<dbReference type="Pfam" id="PF01926">
    <property type="entry name" value="MMR_HSR1"/>
    <property type="match status" value="1"/>
</dbReference>
<dbReference type="Pfam" id="PF12631">
    <property type="entry name" value="MnmE_helical"/>
    <property type="match status" value="1"/>
</dbReference>
<dbReference type="Pfam" id="PF10396">
    <property type="entry name" value="TrmE_N"/>
    <property type="match status" value="1"/>
</dbReference>
<dbReference type="PRINTS" id="PR00326">
    <property type="entry name" value="GTP1OBG"/>
</dbReference>
<dbReference type="SUPFAM" id="SSF52540">
    <property type="entry name" value="P-loop containing nucleoside triphosphate hydrolases"/>
    <property type="match status" value="1"/>
</dbReference>
<dbReference type="SUPFAM" id="SSF116878">
    <property type="entry name" value="TrmE connector domain"/>
    <property type="match status" value="1"/>
</dbReference>
<dbReference type="PROSITE" id="PS51709">
    <property type="entry name" value="G_TRME"/>
    <property type="match status" value="1"/>
</dbReference>
<keyword id="KW-0963">Cytoplasm</keyword>
<keyword id="KW-0342">GTP-binding</keyword>
<keyword id="KW-0378">Hydrolase</keyword>
<keyword id="KW-0460">Magnesium</keyword>
<keyword id="KW-0479">Metal-binding</keyword>
<keyword id="KW-0547">Nucleotide-binding</keyword>
<keyword id="KW-0630">Potassium</keyword>
<keyword id="KW-1185">Reference proteome</keyword>
<keyword id="KW-0819">tRNA processing</keyword>
<evidence type="ECO:0000255" key="1">
    <source>
        <dbReference type="HAMAP-Rule" id="MF_00379"/>
    </source>
</evidence>
<evidence type="ECO:0000305" key="2"/>
<feature type="chain" id="PRO_0000345879" description="tRNA modification GTPase MnmE">
    <location>
        <begin position="1"/>
        <end position="475"/>
    </location>
</feature>
<feature type="domain" description="TrmE-type G">
    <location>
        <begin position="220"/>
        <end position="397"/>
    </location>
</feature>
<feature type="binding site" evidence="1">
    <location>
        <position position="24"/>
    </location>
    <ligand>
        <name>(6S)-5-formyl-5,6,7,8-tetrahydrofolate</name>
        <dbReference type="ChEBI" id="CHEBI:57457"/>
    </ligand>
</feature>
<feature type="binding site" evidence="1">
    <location>
        <position position="81"/>
    </location>
    <ligand>
        <name>(6S)-5-formyl-5,6,7,8-tetrahydrofolate</name>
        <dbReference type="ChEBI" id="CHEBI:57457"/>
    </ligand>
</feature>
<feature type="binding site" evidence="1">
    <location>
        <position position="124"/>
    </location>
    <ligand>
        <name>(6S)-5-formyl-5,6,7,8-tetrahydrofolate</name>
        <dbReference type="ChEBI" id="CHEBI:57457"/>
    </ligand>
</feature>
<feature type="binding site" evidence="1">
    <location>
        <begin position="230"/>
        <end position="235"/>
    </location>
    <ligand>
        <name>GTP</name>
        <dbReference type="ChEBI" id="CHEBI:37565"/>
    </ligand>
</feature>
<feature type="binding site" evidence="1">
    <location>
        <position position="230"/>
    </location>
    <ligand>
        <name>K(+)</name>
        <dbReference type="ChEBI" id="CHEBI:29103"/>
    </ligand>
</feature>
<feature type="binding site" evidence="1">
    <location>
        <position position="234"/>
    </location>
    <ligand>
        <name>Mg(2+)</name>
        <dbReference type="ChEBI" id="CHEBI:18420"/>
    </ligand>
</feature>
<feature type="binding site" evidence="1">
    <location>
        <begin position="249"/>
        <end position="255"/>
    </location>
    <ligand>
        <name>GTP</name>
        <dbReference type="ChEBI" id="CHEBI:37565"/>
    </ligand>
</feature>
<feature type="binding site" evidence="1">
    <location>
        <position position="249"/>
    </location>
    <ligand>
        <name>K(+)</name>
        <dbReference type="ChEBI" id="CHEBI:29103"/>
    </ligand>
</feature>
<feature type="binding site" evidence="1">
    <location>
        <position position="251"/>
    </location>
    <ligand>
        <name>K(+)</name>
        <dbReference type="ChEBI" id="CHEBI:29103"/>
    </ligand>
</feature>
<feature type="binding site" evidence="1">
    <location>
        <position position="254"/>
    </location>
    <ligand>
        <name>K(+)</name>
        <dbReference type="ChEBI" id="CHEBI:29103"/>
    </ligand>
</feature>
<feature type="binding site" evidence="1">
    <location>
        <position position="255"/>
    </location>
    <ligand>
        <name>Mg(2+)</name>
        <dbReference type="ChEBI" id="CHEBI:18420"/>
    </ligand>
</feature>
<feature type="binding site" evidence="1">
    <location>
        <begin position="274"/>
        <end position="277"/>
    </location>
    <ligand>
        <name>GTP</name>
        <dbReference type="ChEBI" id="CHEBI:37565"/>
    </ligand>
</feature>
<feature type="binding site" evidence="1">
    <location>
        <begin position="378"/>
        <end position="380"/>
    </location>
    <ligand>
        <name>GTP</name>
        <dbReference type="ChEBI" id="CHEBI:37565"/>
    </ligand>
</feature>
<feature type="binding site" evidence="1">
    <location>
        <position position="475"/>
    </location>
    <ligand>
        <name>(6S)-5-formyl-5,6,7,8-tetrahydrofolate</name>
        <dbReference type="ChEBI" id="CHEBI:57457"/>
    </ligand>
</feature>
<protein>
    <recommendedName>
        <fullName evidence="1">tRNA modification GTPase MnmE</fullName>
        <ecNumber evidence="1">3.6.-.-</ecNumber>
    </recommendedName>
</protein>
<reference key="1">
    <citation type="journal article" date="2006" name="Nat. Biotechnol.">
        <title>Genome sequence of the bioplastic-producing 'Knallgas' bacterium Ralstonia eutropha H16.</title>
        <authorList>
            <person name="Pohlmann A."/>
            <person name="Fricke W.F."/>
            <person name="Reinecke F."/>
            <person name="Kusian B."/>
            <person name="Liesegang H."/>
            <person name="Cramm R."/>
            <person name="Eitinger T."/>
            <person name="Ewering C."/>
            <person name="Poetter M."/>
            <person name="Schwartz E."/>
            <person name="Strittmatter A."/>
            <person name="Voss I."/>
            <person name="Gottschalk G."/>
            <person name="Steinbuechel A."/>
            <person name="Friedrich B."/>
            <person name="Bowien B."/>
        </authorList>
    </citation>
    <scope>NUCLEOTIDE SEQUENCE [LARGE SCALE GENOMIC DNA]</scope>
    <source>
        <strain>ATCC 17699 / DSM 428 / KCTC 22496 / NCIMB 10442 / H16 / Stanier 337</strain>
    </source>
</reference>
<proteinExistence type="inferred from homology"/>
<name>MNME_CUPNH</name>